<organism>
    <name type="scientific">Arabidopsis thaliana</name>
    <name type="common">Mouse-ear cress</name>
    <dbReference type="NCBI Taxonomy" id="3702"/>
    <lineage>
        <taxon>Eukaryota</taxon>
        <taxon>Viridiplantae</taxon>
        <taxon>Streptophyta</taxon>
        <taxon>Embryophyta</taxon>
        <taxon>Tracheophyta</taxon>
        <taxon>Spermatophyta</taxon>
        <taxon>Magnoliopsida</taxon>
        <taxon>eudicotyledons</taxon>
        <taxon>Gunneridae</taxon>
        <taxon>Pentapetalae</taxon>
        <taxon>rosids</taxon>
        <taxon>malvids</taxon>
        <taxon>Brassicales</taxon>
        <taxon>Brassicaceae</taxon>
        <taxon>Camelineae</taxon>
        <taxon>Arabidopsis</taxon>
    </lineage>
</organism>
<protein>
    <recommendedName>
        <fullName evidence="5">Aspartyl protease APCB1</fullName>
        <ecNumber evidence="6">3.4.23.-</ecNumber>
    </recommendedName>
    <alternativeName>
        <fullName evidence="5">Aspartyl protease cleaving BAG 1</fullName>
    </alternativeName>
</protein>
<reference key="1">
    <citation type="journal article" date="2000" name="Nature">
        <title>Sequence and analysis of chromosome 1 of the plant Arabidopsis thaliana.</title>
        <authorList>
            <person name="Theologis A."/>
            <person name="Ecker J.R."/>
            <person name="Palm C.J."/>
            <person name="Federspiel N.A."/>
            <person name="Kaul S."/>
            <person name="White O."/>
            <person name="Alonso J."/>
            <person name="Altafi H."/>
            <person name="Araujo R."/>
            <person name="Bowman C.L."/>
            <person name="Brooks S.Y."/>
            <person name="Buehler E."/>
            <person name="Chan A."/>
            <person name="Chao Q."/>
            <person name="Chen H."/>
            <person name="Cheuk R.F."/>
            <person name="Chin C.W."/>
            <person name="Chung M.K."/>
            <person name="Conn L."/>
            <person name="Conway A.B."/>
            <person name="Conway A.R."/>
            <person name="Creasy T.H."/>
            <person name="Dewar K."/>
            <person name="Dunn P."/>
            <person name="Etgu P."/>
            <person name="Feldblyum T.V."/>
            <person name="Feng J.-D."/>
            <person name="Fong B."/>
            <person name="Fujii C.Y."/>
            <person name="Gill J.E."/>
            <person name="Goldsmith A.D."/>
            <person name="Haas B."/>
            <person name="Hansen N.F."/>
            <person name="Hughes B."/>
            <person name="Huizar L."/>
            <person name="Hunter J.L."/>
            <person name="Jenkins J."/>
            <person name="Johnson-Hopson C."/>
            <person name="Khan S."/>
            <person name="Khaykin E."/>
            <person name="Kim C.J."/>
            <person name="Koo H.L."/>
            <person name="Kremenetskaia I."/>
            <person name="Kurtz D.B."/>
            <person name="Kwan A."/>
            <person name="Lam B."/>
            <person name="Langin-Hooper S."/>
            <person name="Lee A."/>
            <person name="Lee J.M."/>
            <person name="Lenz C.A."/>
            <person name="Li J.H."/>
            <person name="Li Y.-P."/>
            <person name="Lin X."/>
            <person name="Liu S.X."/>
            <person name="Liu Z.A."/>
            <person name="Luros J.S."/>
            <person name="Maiti R."/>
            <person name="Marziali A."/>
            <person name="Militscher J."/>
            <person name="Miranda M."/>
            <person name="Nguyen M."/>
            <person name="Nierman W.C."/>
            <person name="Osborne B.I."/>
            <person name="Pai G."/>
            <person name="Peterson J."/>
            <person name="Pham P.K."/>
            <person name="Rizzo M."/>
            <person name="Rooney T."/>
            <person name="Rowley D."/>
            <person name="Sakano H."/>
            <person name="Salzberg S.L."/>
            <person name="Schwartz J.R."/>
            <person name="Shinn P."/>
            <person name="Southwick A.M."/>
            <person name="Sun H."/>
            <person name="Tallon L.J."/>
            <person name="Tambunga G."/>
            <person name="Toriumi M.J."/>
            <person name="Town C.D."/>
            <person name="Utterback T."/>
            <person name="Van Aken S."/>
            <person name="Vaysberg M."/>
            <person name="Vysotskaia V.S."/>
            <person name="Walker M."/>
            <person name="Wu D."/>
            <person name="Yu G."/>
            <person name="Fraser C.M."/>
            <person name="Venter J.C."/>
            <person name="Davis R.W."/>
        </authorList>
    </citation>
    <scope>NUCLEOTIDE SEQUENCE [LARGE SCALE GENOMIC DNA]</scope>
    <source>
        <strain>cv. Columbia</strain>
    </source>
</reference>
<reference key="2">
    <citation type="journal article" date="2017" name="Plant J.">
        <title>Araport11: a complete reannotation of the Arabidopsis thaliana reference genome.</title>
        <authorList>
            <person name="Cheng C.Y."/>
            <person name="Krishnakumar V."/>
            <person name="Chan A.P."/>
            <person name="Thibaud-Nissen F."/>
            <person name="Schobel S."/>
            <person name="Town C.D."/>
        </authorList>
    </citation>
    <scope>GENOME REANNOTATION</scope>
    <source>
        <strain>cv. Columbia</strain>
    </source>
</reference>
<reference key="3">
    <citation type="journal article" date="2003" name="Science">
        <title>Empirical analysis of transcriptional activity in the Arabidopsis genome.</title>
        <authorList>
            <person name="Yamada K."/>
            <person name="Lim J."/>
            <person name="Dale J.M."/>
            <person name="Chen H."/>
            <person name="Shinn P."/>
            <person name="Palm C.J."/>
            <person name="Southwick A.M."/>
            <person name="Wu H.C."/>
            <person name="Kim C.J."/>
            <person name="Nguyen M."/>
            <person name="Pham P.K."/>
            <person name="Cheuk R.F."/>
            <person name="Karlin-Newmann G."/>
            <person name="Liu S.X."/>
            <person name="Lam B."/>
            <person name="Sakano H."/>
            <person name="Wu T."/>
            <person name="Yu G."/>
            <person name="Miranda M."/>
            <person name="Quach H.L."/>
            <person name="Tripp M."/>
            <person name="Chang C.H."/>
            <person name="Lee J.M."/>
            <person name="Toriumi M.J."/>
            <person name="Chan M.M."/>
            <person name="Tang C.C."/>
            <person name="Onodera C.S."/>
            <person name="Deng J.M."/>
            <person name="Akiyama K."/>
            <person name="Ansari Y."/>
            <person name="Arakawa T."/>
            <person name="Banh J."/>
            <person name="Banno F."/>
            <person name="Bowser L."/>
            <person name="Brooks S.Y."/>
            <person name="Carninci P."/>
            <person name="Chao Q."/>
            <person name="Choy N."/>
            <person name="Enju A."/>
            <person name="Goldsmith A.D."/>
            <person name="Gurjal M."/>
            <person name="Hansen N.F."/>
            <person name="Hayashizaki Y."/>
            <person name="Johnson-Hopson C."/>
            <person name="Hsuan V.W."/>
            <person name="Iida K."/>
            <person name="Karnes M."/>
            <person name="Khan S."/>
            <person name="Koesema E."/>
            <person name="Ishida J."/>
            <person name="Jiang P.X."/>
            <person name="Jones T."/>
            <person name="Kawai J."/>
            <person name="Kamiya A."/>
            <person name="Meyers C."/>
            <person name="Nakajima M."/>
            <person name="Narusaka M."/>
            <person name="Seki M."/>
            <person name="Sakurai T."/>
            <person name="Satou M."/>
            <person name="Tamse R."/>
            <person name="Vaysberg M."/>
            <person name="Wallender E.K."/>
            <person name="Wong C."/>
            <person name="Yamamura Y."/>
            <person name="Yuan S."/>
            <person name="Shinozaki K."/>
            <person name="Davis R.W."/>
            <person name="Theologis A."/>
            <person name="Ecker J.R."/>
        </authorList>
    </citation>
    <scope>NUCLEOTIDE SEQUENCE [LARGE SCALE MRNA] (ISOFORM 1)</scope>
    <source>
        <strain>cv. Columbia</strain>
    </source>
</reference>
<reference key="4">
    <citation type="journal article" date="2005" name="Curr. Protein Pept. Sci.">
        <title>Aspartic proteinase content of the Arabidopsis genome.</title>
        <authorList>
            <person name="Faro C."/>
            <person name="Gal S."/>
        </authorList>
    </citation>
    <scope>GENE FAMILY</scope>
</reference>
<reference key="5">
    <citation type="journal article" date="2016" name="Plant Cell">
        <title>Aspartyl protease-mediated cleavage of BAG6 is necessary for autophagy and fungal resistance in plants.</title>
        <authorList>
            <person name="Li Y."/>
            <person name="Kabbage M."/>
            <person name="Liu W."/>
            <person name="Dickman M.B."/>
        </authorList>
    </citation>
    <scope>FUNCTION</scope>
    <scope>DISRUPTION PHENOTYPE</scope>
    <scope>INTERACTION WITH BAG6 AND BAGP1</scope>
    <scope>MUTAGENESIS OF ASP-223 AND ASP-431</scope>
</reference>
<dbReference type="EC" id="3.4.23.-" evidence="6"/>
<dbReference type="EMBL" id="AC016041">
    <property type="protein sequence ID" value="AAF69716.1"/>
    <property type="molecule type" value="Genomic_DNA"/>
</dbReference>
<dbReference type="EMBL" id="CP002684">
    <property type="protein sequence ID" value="AEE32388.1"/>
    <property type="molecule type" value="Genomic_DNA"/>
</dbReference>
<dbReference type="EMBL" id="CP002684">
    <property type="protein sequence ID" value="AEE32389.1"/>
    <property type="molecule type" value="Genomic_DNA"/>
</dbReference>
<dbReference type="EMBL" id="AF360182">
    <property type="protein sequence ID" value="AAK25892.1"/>
    <property type="molecule type" value="mRNA"/>
</dbReference>
<dbReference type="EMBL" id="AY039998">
    <property type="protein sequence ID" value="AAK64075.1"/>
    <property type="molecule type" value="mRNA"/>
</dbReference>
<dbReference type="RefSeq" id="NP_001077691.1">
    <molecule id="Q9M9A8-2"/>
    <property type="nucleotide sequence ID" value="NM_001084222.1"/>
</dbReference>
<dbReference type="RefSeq" id="NP_564539.1">
    <molecule id="Q9M9A8-1"/>
    <property type="nucleotide sequence ID" value="NM_103798.5"/>
</dbReference>
<dbReference type="SMR" id="Q9M9A8"/>
<dbReference type="FunCoup" id="Q9M9A8">
    <property type="interactions" value="76"/>
</dbReference>
<dbReference type="STRING" id="3702.Q9M9A8"/>
<dbReference type="MEROPS" id="A01.A25"/>
<dbReference type="PaxDb" id="3702-AT1G49050.1"/>
<dbReference type="ProteomicsDB" id="224556">
    <molecule id="Q9M9A8-1"/>
</dbReference>
<dbReference type="EnsemblPlants" id="AT1G49050.1">
    <molecule id="Q9M9A8-1"/>
    <property type="protein sequence ID" value="AT1G49050.1"/>
    <property type="gene ID" value="AT1G49050"/>
</dbReference>
<dbReference type="EnsemblPlants" id="AT1G49050.2">
    <molecule id="Q9M9A8-2"/>
    <property type="protein sequence ID" value="AT1G49050.2"/>
    <property type="gene ID" value="AT1G49050"/>
</dbReference>
<dbReference type="GeneID" id="841328"/>
<dbReference type="Gramene" id="AT1G49050.1">
    <molecule id="Q9M9A8-1"/>
    <property type="protein sequence ID" value="AT1G49050.1"/>
    <property type="gene ID" value="AT1G49050"/>
</dbReference>
<dbReference type="Gramene" id="AT1G49050.2">
    <molecule id="Q9M9A8-2"/>
    <property type="protein sequence ID" value="AT1G49050.2"/>
    <property type="gene ID" value="AT1G49050"/>
</dbReference>
<dbReference type="KEGG" id="ath:AT1G49050"/>
<dbReference type="Araport" id="AT1G49050"/>
<dbReference type="TAIR" id="AT1G49050">
    <property type="gene designation" value="APCB1"/>
</dbReference>
<dbReference type="eggNOG" id="KOG1339">
    <property type="taxonomic scope" value="Eukaryota"/>
</dbReference>
<dbReference type="HOGENOM" id="CLU_005738_3_2_1"/>
<dbReference type="InParanoid" id="Q9M9A8"/>
<dbReference type="OMA" id="CWRANFP"/>
<dbReference type="PhylomeDB" id="Q9M9A8"/>
<dbReference type="PRO" id="PR:Q9M9A8"/>
<dbReference type="Proteomes" id="UP000006548">
    <property type="component" value="Chromosome 1"/>
</dbReference>
<dbReference type="ExpressionAtlas" id="Q9M9A8">
    <property type="expression patterns" value="baseline and differential"/>
</dbReference>
<dbReference type="GO" id="GO:0016020">
    <property type="term" value="C:membrane"/>
    <property type="evidence" value="ECO:0007669"/>
    <property type="project" value="UniProtKB-SubCell"/>
</dbReference>
<dbReference type="GO" id="GO:0004190">
    <property type="term" value="F:aspartic-type endopeptidase activity"/>
    <property type="evidence" value="ECO:0000315"/>
    <property type="project" value="TAIR"/>
</dbReference>
<dbReference type="GO" id="GO:0050832">
    <property type="term" value="P:defense response to fungus"/>
    <property type="evidence" value="ECO:0000315"/>
    <property type="project" value="TAIR"/>
</dbReference>
<dbReference type="GO" id="GO:0006508">
    <property type="term" value="P:proteolysis"/>
    <property type="evidence" value="ECO:0007669"/>
    <property type="project" value="UniProtKB-KW"/>
</dbReference>
<dbReference type="CDD" id="cd05475">
    <property type="entry name" value="nucellin_like"/>
    <property type="match status" value="1"/>
</dbReference>
<dbReference type="FunFam" id="2.40.70.10:FF:000061">
    <property type="entry name" value="Aspartyl protease APCB1"/>
    <property type="match status" value="1"/>
</dbReference>
<dbReference type="FunFam" id="2.40.70.10:FF:000015">
    <property type="entry name" value="Aspartyl protease family protein"/>
    <property type="match status" value="1"/>
</dbReference>
<dbReference type="Gene3D" id="2.40.70.10">
    <property type="entry name" value="Acid Proteases"/>
    <property type="match status" value="2"/>
</dbReference>
<dbReference type="InterPro" id="IPR001461">
    <property type="entry name" value="Aspartic_peptidase_A1"/>
</dbReference>
<dbReference type="InterPro" id="IPR001969">
    <property type="entry name" value="Aspartic_peptidase_AS"/>
</dbReference>
<dbReference type="InterPro" id="IPR033823">
    <property type="entry name" value="Nucellin"/>
</dbReference>
<dbReference type="InterPro" id="IPR033121">
    <property type="entry name" value="PEPTIDASE_A1"/>
</dbReference>
<dbReference type="InterPro" id="IPR021109">
    <property type="entry name" value="Peptidase_aspartic_dom_sf"/>
</dbReference>
<dbReference type="InterPro" id="IPR032799">
    <property type="entry name" value="TAXi_C"/>
</dbReference>
<dbReference type="InterPro" id="IPR032861">
    <property type="entry name" value="TAXi_N"/>
</dbReference>
<dbReference type="PANTHER" id="PTHR13683:SF316">
    <property type="entry name" value="ASPARTYL PROTEASE APCB1"/>
    <property type="match status" value="1"/>
</dbReference>
<dbReference type="PANTHER" id="PTHR13683">
    <property type="entry name" value="ASPARTYL PROTEASES"/>
    <property type="match status" value="1"/>
</dbReference>
<dbReference type="Pfam" id="PF14541">
    <property type="entry name" value="TAXi_C"/>
    <property type="match status" value="1"/>
</dbReference>
<dbReference type="Pfam" id="PF14543">
    <property type="entry name" value="TAXi_N"/>
    <property type="match status" value="1"/>
</dbReference>
<dbReference type="SUPFAM" id="SSF50630">
    <property type="entry name" value="Acid proteases"/>
    <property type="match status" value="1"/>
</dbReference>
<dbReference type="PROSITE" id="PS00141">
    <property type="entry name" value="ASP_PROTEASE"/>
    <property type="match status" value="2"/>
</dbReference>
<dbReference type="PROSITE" id="PS51767">
    <property type="entry name" value="PEPTIDASE_A1"/>
    <property type="match status" value="1"/>
</dbReference>
<gene>
    <name evidence="5" type="primary">APCB1</name>
    <name evidence="7" type="ordered locus">At1g49050</name>
    <name evidence="8" type="ORF">F27J15.15</name>
</gene>
<accession>Q9M9A8</accession>
<accession>A8MQI7</accession>
<proteinExistence type="evidence at protein level"/>
<comment type="function">
    <text evidence="4">Involved in proteolytic processing of BAG6 and plant basal immunity.</text>
</comment>
<comment type="subunit">
    <text evidence="4">Interacts with BAG6 and BAGP1.</text>
</comment>
<comment type="subcellular location">
    <subcellularLocation>
        <location evidence="1">Membrane</location>
        <topology evidence="1">Single-pass membrane protein</topology>
    </subcellularLocation>
</comment>
<comment type="alternative products">
    <event type="alternative splicing"/>
    <isoform>
        <id>Q9M9A8-1</id>
        <name>1</name>
        <sequence type="displayed"/>
    </isoform>
    <isoform>
        <id>Q9M9A8-2</id>
        <name>2</name>
        <sequence type="described" ref="VSP_058207"/>
    </isoform>
</comment>
<comment type="disruption phenotype">
    <text evidence="4">Enhanced susceptibility to B.cinerea and permissive fungal growth.</text>
</comment>
<comment type="similarity">
    <text evidence="6">Belongs to the peptidase A1 family.</text>
</comment>
<keyword id="KW-0025">Alternative splicing</keyword>
<keyword id="KW-0064">Aspartyl protease</keyword>
<keyword id="KW-0378">Hydrolase</keyword>
<keyword id="KW-0472">Membrane</keyword>
<keyword id="KW-0645">Protease</keyword>
<keyword id="KW-1185">Reference proteome</keyword>
<keyword id="KW-0812">Transmembrane</keyword>
<keyword id="KW-1133">Transmembrane helix</keyword>
<evidence type="ECO:0000255" key="1"/>
<evidence type="ECO:0000255" key="2">
    <source>
        <dbReference type="PROSITE-ProRule" id="PRU01103"/>
    </source>
</evidence>
<evidence type="ECO:0000255" key="3">
    <source>
        <dbReference type="PROSITE-ProRule" id="PRU10094"/>
    </source>
</evidence>
<evidence type="ECO:0000269" key="4">
    <source>
    </source>
</evidence>
<evidence type="ECO:0000303" key="5">
    <source>
    </source>
</evidence>
<evidence type="ECO:0000305" key="6"/>
<evidence type="ECO:0000312" key="7">
    <source>
        <dbReference type="Araport" id="AT1G49050"/>
    </source>
</evidence>
<evidence type="ECO:0000312" key="8">
    <source>
        <dbReference type="EMBL" id="AAF69716.1"/>
    </source>
</evidence>
<sequence>MEPDLHDQQQQQRVHSVVIITLPPSDDPSQGKTISAFTLTDHDYPLEIPPEDNPNPSFQPDPLHRNQQSRLLFSDLSMNSPRLVLGLLGISLLAVAFYASVFPNSVQMFRVSPDERNRDDDDNLRETASFVFPVYHKLRAREFHERILEEDLGLENENFVESMDLELVNPVKVNDVLSTSAGSIDSSTTIFPVGGNVYPDGLYYTRILVGKPEDGQYYHLDIDTGSELTWIQCDAPCTSCAKGANQLYKPRKDNLVRSSEAFCVEVQRNQLTEHCENCHQCDYEIEYADHSYSMGVLTKDKFHLKLHNGSLAESDIVFGCGYDQQGLLLNTLLKTDGILGLSRAKISLPSQLASRGIISNVVGHCLASDLNGEGYIFMGSDLVPSHGMTWVPMLHDSRLDAYQMQVTKMSYGQGMLSLDGENGRVGKVLFDTGSSYTYFPNQAYSQLVTSLQEVSGLELTRDDSDETLPICWRAKTNFPFSSLSDVKKFFRPITLQIGSKWLIISRKLLIQPEDYLIISNKGNVCLGILDGSSVHDGSTIILGDISMRGHLIVYDNVKRRIGWMKSDCVRPREIDHNVPFFQG</sequence>
<name>APCB1_ARATH</name>
<feature type="chain" id="PRO_0000436003" description="Aspartyl protease APCB1">
    <location>
        <begin position="1"/>
        <end position="583"/>
    </location>
</feature>
<feature type="transmembrane region" description="Helical" evidence="1">
    <location>
        <begin position="83"/>
        <end position="103"/>
    </location>
</feature>
<feature type="domain" description="Peptidase A1" evidence="2">
    <location>
        <begin position="203"/>
        <end position="564"/>
    </location>
</feature>
<feature type="active site" evidence="3">
    <location>
        <position position="223"/>
    </location>
</feature>
<feature type="active site" evidence="3">
    <location>
        <position position="431"/>
    </location>
</feature>
<feature type="splice variant" id="VSP_058207" description="In isoform 2.">
    <original>MEPDLHDQQQQQRVHSVVIITLPPSDDPSQGKTISAFTLTDHDYPLEIPPEDNPNPSFQPDPLHRNQQSRLLFSDLSMNSPRLVLGLLGISLLAVAFYASVFPNSVQMFRVSPDERNRDDDDNLRETASFVFPVYHKLRAREFHERILEEDLGLENENFVESMDLELVNPVKVNDVLSTSAGSIDSSTTIFPVGGNVYPDG</original>
    <variation>MFYLQVPVLLTPPLRFFPSVVMCIQMGM</variation>
    <location>
        <begin position="1"/>
        <end position="201"/>
    </location>
</feature>
<feature type="mutagenesis site" description="Loss of protease activity; when associated with A-431." evidence="4">
    <original>D</original>
    <variation>A</variation>
    <location>
        <position position="223"/>
    </location>
</feature>
<feature type="mutagenesis site" description="Loss of protease activity; when associated with A-223." evidence="4">
    <original>D</original>
    <variation>A</variation>
    <location>
        <position position="431"/>
    </location>
</feature>